<gene>
    <name evidence="1" type="primary">glyQ</name>
    <name type="ordered locus">SAK_0340</name>
</gene>
<keyword id="KW-0030">Aminoacyl-tRNA synthetase</keyword>
<keyword id="KW-0067">ATP-binding</keyword>
<keyword id="KW-0963">Cytoplasm</keyword>
<keyword id="KW-0436">Ligase</keyword>
<keyword id="KW-0547">Nucleotide-binding</keyword>
<keyword id="KW-0648">Protein biosynthesis</keyword>
<accession>Q3K3B1</accession>
<dbReference type="EC" id="6.1.1.14" evidence="1"/>
<dbReference type="EMBL" id="CP000114">
    <property type="protein sequence ID" value="ABA44566.1"/>
    <property type="molecule type" value="Genomic_DNA"/>
</dbReference>
<dbReference type="RefSeq" id="WP_000038755.1">
    <property type="nucleotide sequence ID" value="NC_007432.1"/>
</dbReference>
<dbReference type="SMR" id="Q3K3B1"/>
<dbReference type="GeneID" id="66885241"/>
<dbReference type="KEGG" id="sak:SAK_0340"/>
<dbReference type="HOGENOM" id="CLU_057066_1_0_9"/>
<dbReference type="GO" id="GO:0005829">
    <property type="term" value="C:cytosol"/>
    <property type="evidence" value="ECO:0007669"/>
    <property type="project" value="TreeGrafter"/>
</dbReference>
<dbReference type="GO" id="GO:0005524">
    <property type="term" value="F:ATP binding"/>
    <property type="evidence" value="ECO:0007669"/>
    <property type="project" value="UniProtKB-UniRule"/>
</dbReference>
<dbReference type="GO" id="GO:0140096">
    <property type="term" value="F:catalytic activity, acting on a protein"/>
    <property type="evidence" value="ECO:0007669"/>
    <property type="project" value="UniProtKB-ARBA"/>
</dbReference>
<dbReference type="GO" id="GO:0004820">
    <property type="term" value="F:glycine-tRNA ligase activity"/>
    <property type="evidence" value="ECO:0007669"/>
    <property type="project" value="UniProtKB-UniRule"/>
</dbReference>
<dbReference type="GO" id="GO:0016740">
    <property type="term" value="F:transferase activity"/>
    <property type="evidence" value="ECO:0007669"/>
    <property type="project" value="UniProtKB-ARBA"/>
</dbReference>
<dbReference type="GO" id="GO:0006426">
    <property type="term" value="P:glycyl-tRNA aminoacylation"/>
    <property type="evidence" value="ECO:0007669"/>
    <property type="project" value="UniProtKB-UniRule"/>
</dbReference>
<dbReference type="CDD" id="cd00733">
    <property type="entry name" value="GlyRS_alpha_core"/>
    <property type="match status" value="1"/>
</dbReference>
<dbReference type="FunFam" id="3.30.930.10:FF:000006">
    <property type="entry name" value="Glycine--tRNA ligase alpha subunit"/>
    <property type="match status" value="1"/>
</dbReference>
<dbReference type="Gene3D" id="3.30.930.10">
    <property type="entry name" value="Bira Bifunctional Protein, Domain 2"/>
    <property type="match status" value="1"/>
</dbReference>
<dbReference type="Gene3D" id="1.20.58.180">
    <property type="entry name" value="Class II aaRS and biotin synthetases, domain 2"/>
    <property type="match status" value="1"/>
</dbReference>
<dbReference type="HAMAP" id="MF_00254">
    <property type="entry name" value="Gly_tRNA_synth_alpha"/>
    <property type="match status" value="1"/>
</dbReference>
<dbReference type="InterPro" id="IPR045864">
    <property type="entry name" value="aa-tRNA-synth_II/BPL/LPL"/>
</dbReference>
<dbReference type="InterPro" id="IPR006194">
    <property type="entry name" value="Gly-tRNA-synth_heterodimer"/>
</dbReference>
<dbReference type="InterPro" id="IPR002310">
    <property type="entry name" value="Gly-tRNA_ligase_asu"/>
</dbReference>
<dbReference type="NCBIfam" id="TIGR00388">
    <property type="entry name" value="glyQ"/>
    <property type="match status" value="1"/>
</dbReference>
<dbReference type="NCBIfam" id="NF006827">
    <property type="entry name" value="PRK09348.1"/>
    <property type="match status" value="1"/>
</dbReference>
<dbReference type="PANTHER" id="PTHR30075:SF2">
    <property type="entry name" value="GLYCINE--TRNA LIGASE, CHLOROPLASTIC_MITOCHONDRIAL 2"/>
    <property type="match status" value="1"/>
</dbReference>
<dbReference type="PANTHER" id="PTHR30075">
    <property type="entry name" value="GLYCYL-TRNA SYNTHETASE"/>
    <property type="match status" value="1"/>
</dbReference>
<dbReference type="Pfam" id="PF02091">
    <property type="entry name" value="tRNA-synt_2e"/>
    <property type="match status" value="1"/>
</dbReference>
<dbReference type="PRINTS" id="PR01044">
    <property type="entry name" value="TRNASYNTHGA"/>
</dbReference>
<dbReference type="SUPFAM" id="SSF55681">
    <property type="entry name" value="Class II aaRS and biotin synthetases"/>
    <property type="match status" value="1"/>
</dbReference>
<dbReference type="PROSITE" id="PS50861">
    <property type="entry name" value="AA_TRNA_LIGASE_II_GLYAB"/>
    <property type="match status" value="1"/>
</dbReference>
<sequence length="304" mass="34943">MSKKLTFQEIILTLQQFWNDQGCMLMQAYDNEKGAGTMSPYTFLRAIGPEPWNAAYVEPSRRPADGRYGENPNRLYQHHQFQVVMKPSPSNIQELYLKSLELLGINPLEHDIRFVEDNWENPSTGSAGLGWEVWLDGMEITQFTYFQQVGGLQTGPVTSEVTYGLERLASYIQEVDSVYDIEWAPGVKYGEIFTQPEYEHSKYSFEISDQVMLLENFEKFEREAKRALEEGLVHPAYDYVLKCSHTFNLLDARGAVSVTERAGYIARIRNLARVVAKTFVAERKKLGFPLLDEETRIKLLAEED</sequence>
<name>SYGA_STRA1</name>
<proteinExistence type="inferred from homology"/>
<comment type="catalytic activity">
    <reaction evidence="1">
        <text>tRNA(Gly) + glycine + ATP = glycyl-tRNA(Gly) + AMP + diphosphate</text>
        <dbReference type="Rhea" id="RHEA:16013"/>
        <dbReference type="Rhea" id="RHEA-COMP:9664"/>
        <dbReference type="Rhea" id="RHEA-COMP:9683"/>
        <dbReference type="ChEBI" id="CHEBI:30616"/>
        <dbReference type="ChEBI" id="CHEBI:33019"/>
        <dbReference type="ChEBI" id="CHEBI:57305"/>
        <dbReference type="ChEBI" id="CHEBI:78442"/>
        <dbReference type="ChEBI" id="CHEBI:78522"/>
        <dbReference type="ChEBI" id="CHEBI:456215"/>
        <dbReference type="EC" id="6.1.1.14"/>
    </reaction>
</comment>
<comment type="subunit">
    <text evidence="1">Tetramer of two alpha and two beta subunits.</text>
</comment>
<comment type="subcellular location">
    <subcellularLocation>
        <location evidence="1">Cytoplasm</location>
    </subcellularLocation>
</comment>
<comment type="similarity">
    <text evidence="1">Belongs to the class-II aminoacyl-tRNA synthetase family.</text>
</comment>
<reference key="1">
    <citation type="journal article" date="2005" name="Proc. Natl. Acad. Sci. U.S.A.">
        <title>Genome analysis of multiple pathogenic isolates of Streptococcus agalactiae: implications for the microbial 'pan-genome'.</title>
        <authorList>
            <person name="Tettelin H."/>
            <person name="Masignani V."/>
            <person name="Cieslewicz M.J."/>
            <person name="Donati C."/>
            <person name="Medini D."/>
            <person name="Ward N.L."/>
            <person name="Angiuoli S.V."/>
            <person name="Crabtree J."/>
            <person name="Jones A.L."/>
            <person name="Durkin A.S."/>
            <person name="DeBoy R.T."/>
            <person name="Davidsen T.M."/>
            <person name="Mora M."/>
            <person name="Scarselli M."/>
            <person name="Margarit y Ros I."/>
            <person name="Peterson J.D."/>
            <person name="Hauser C.R."/>
            <person name="Sundaram J.P."/>
            <person name="Nelson W.C."/>
            <person name="Madupu R."/>
            <person name="Brinkac L.M."/>
            <person name="Dodson R.J."/>
            <person name="Rosovitz M.J."/>
            <person name="Sullivan S.A."/>
            <person name="Daugherty S.C."/>
            <person name="Haft D.H."/>
            <person name="Selengut J."/>
            <person name="Gwinn M.L."/>
            <person name="Zhou L."/>
            <person name="Zafar N."/>
            <person name="Khouri H."/>
            <person name="Radune D."/>
            <person name="Dimitrov G."/>
            <person name="Watkins K."/>
            <person name="O'Connor K.J."/>
            <person name="Smith S."/>
            <person name="Utterback T.R."/>
            <person name="White O."/>
            <person name="Rubens C.E."/>
            <person name="Grandi G."/>
            <person name="Madoff L.C."/>
            <person name="Kasper D.L."/>
            <person name="Telford J.L."/>
            <person name="Wessels M.R."/>
            <person name="Rappuoli R."/>
            <person name="Fraser C.M."/>
        </authorList>
    </citation>
    <scope>NUCLEOTIDE SEQUENCE [LARGE SCALE GENOMIC DNA]</scope>
    <source>
        <strain>ATCC 27591 / A909 / CDC SS700</strain>
    </source>
</reference>
<evidence type="ECO:0000255" key="1">
    <source>
        <dbReference type="HAMAP-Rule" id="MF_00254"/>
    </source>
</evidence>
<feature type="chain" id="PRO_1000047498" description="Glycine--tRNA ligase alpha subunit">
    <location>
        <begin position="1"/>
        <end position="304"/>
    </location>
</feature>
<organism>
    <name type="scientific">Streptococcus agalactiae serotype Ia (strain ATCC 27591 / A909 / CDC SS700)</name>
    <dbReference type="NCBI Taxonomy" id="205921"/>
    <lineage>
        <taxon>Bacteria</taxon>
        <taxon>Bacillati</taxon>
        <taxon>Bacillota</taxon>
        <taxon>Bacilli</taxon>
        <taxon>Lactobacillales</taxon>
        <taxon>Streptococcaceae</taxon>
        <taxon>Streptococcus</taxon>
    </lineage>
</organism>
<protein>
    <recommendedName>
        <fullName evidence="1">Glycine--tRNA ligase alpha subunit</fullName>
        <ecNumber evidence="1">6.1.1.14</ecNumber>
    </recommendedName>
    <alternativeName>
        <fullName evidence="1">Glycyl-tRNA synthetase alpha subunit</fullName>
        <shortName evidence="1">GlyRS</shortName>
    </alternativeName>
</protein>